<organismHost>
    <name type="scientific">Homo sapiens</name>
    <name type="common">Human</name>
    <dbReference type="NCBI Taxonomy" id="9606"/>
</organismHost>
<comment type="function">
    <text evidence="1 8 9 11 16 19 21">Transcriptional activator that increases RNA Pol II processivity, thereby increasing the level of full-length viral transcripts. Recognizes a hairpin structure at the 5'-LTR of the nascent viral mRNAs referred to as the transactivation responsive RNA element (TAR) and recruits the cyclin T1-CDK9 complex (P-TEFb complex) that will in turn hyperphosphorylate the RNA polymerase II to allow efficient elongation. The CDK9 component of P-TEFb and other Tat-activated kinases hyperphosphorylate the C-terminus of RNA Pol II that becomes stabilized and much more processive. Other factors such as HTATSF1/Tat-SF1, SUPT5H/SPT5, and HTATIP2 are also important for Tat's function. Besides its effect on RNA Pol II processivity, Tat induces chromatin remodeling of proviral genes by recruiting the histone acetyltransferases (HATs) CREBBP, EP300 and PCAF to the chromatin. This also contributes to the increase in proviral transcription rate, especially when the provirus integrates in transcriptionally silent region of the host genome. To ensure maximal activation of the LTR, Tat mediates nuclear translocation of NF-kappa-B by interacting with host RELA. Through its interaction with host TBP, Tat may also modulate transcription initiation. Tat can reactivate a latently infected cell by penetrating in it and transactivating its LTR promoter. In the cytoplasm, Tat is thought to act as a translational activator of HIV-1 mRNAs.</text>
</comment>
<comment type="function">
    <text evidence="1 3 10 20">Extracellular circulating Tat can be endocytosed by surrounding uninfected cells via the binding to several surface receptors such as CD26, CXCR4, heparan sulfate proteoglycans (HSPG) or LDLR. Neurons are rarely infected, but they internalize Tat via their LDLR. Through its interaction with nuclear HATs, Tat is potentially able to control the acetylation-dependent cellular gene expression. Modulates the expression of many cellular genes involved in cell survival, proliferation or in coding for cytokines or cytokine receptors. Tat plays a role in T-cell and neurons apoptosis. Tat induced neurotoxicity and apoptosis probably contribute to neuroAIDS. Circulating Tat also acts as a chemokine-like and/or growth factor-like molecule that binds to specific receptors on the surface of the cells, affecting many cellular pathways. In the vascular system, Tat binds to ITGAV/ITGB3 and ITGA5/ITGB1 integrins dimers at the surface of endothelial cells and competes with bFGF for heparin-binding sites, leading to an excess of soluble bFGF.</text>
</comment>
<comment type="subunit">
    <text evidence="1 4 6 7 12 13 14 16 17 19 20 21 22">Interacts with host CCNT1. Associates with the P-TEFb complex composed at least of Tat, P-TEFb (CDK9 and CCNT1), TAR RNA, RNA Pol II. Recruits the HATs CREBBP, TAF1/TFIID, EP300, PCAF and GCN5L2. Interacts with host KAT5/Tip60; this interaction targets the latter to degradation. Interacts with the host deacetylase SIRT1. Interacts with host capping enzyme RNGTT; this interaction stimulates RNGTT. Binds to host KDR, and to the host integrins ITGAV/ITGB3 and ITGA5/ITGB1. Interacts with host KPNB1/importin beta-1 without previous binding to KPNA1/importin alpha-1. Interacts with EIF2AK2. Interacts with host nucleosome assembly protein NAP1L1; this interaction may be required for the transport of Tat within the nucleus, since the two proteins interact at the nuclear rim. Interacts with host C1QBP/SF2P32; this interaction involves lysine-acetylated Tat. Interacts with the host chemokine receptors CCR2, CCR3 and CXCR4. Interacts with host DPP4/CD26; this interaction may trigger an anti-proliferative effect. Interacts with host LDLR. Interacts with the host extracellular matrix metalloproteinase MMP1. Interacts with host PRMT6; this interaction mediates Tat's methylation. Interacts with, and is ubiquitinated by MDM2/Hdm2. Interacts with host PSMC3 and HTATIP2. Interacts with STAB1; this interaction may overcome SATB1-mediated repression of IL2 and IL2RA (interleukin) in T cells by binding to the same domain than HDAC1. Interacts (when acetylated) with human CDK13, thereby increasing HIV-1 mRNA splicing and promoting the production of the doubly spliced HIV-1 protein Nef. Interacts with host TBP; this interaction modulates the activity of transcriptional pre-initiation complex. Interacts with host RELA. Interacts with host PLSCR1; this interaction negatively regulates Tat transactivation activity by altering its subcellular distribution (PubMed:23501106).</text>
</comment>
<comment type="interaction">
    <interactant intactId="EBI-6164389">
        <id>P04608</id>
    </interactant>
    <interactant intactId="EBI-6163496">
        <id>P04578</id>
        <label>env</label>
    </interactant>
    <organismsDiffer>false</organismsDiffer>
    <experiments>4</experiments>
</comment>
<comment type="interaction">
    <interactant intactId="EBI-6164389">
        <id>P04608</id>
    </interactant>
    <interactant intactId="EBI-2610180">
        <id>P51825</id>
        <label>AFF1</label>
    </interactant>
    <organismsDiffer>true</organismsDiffer>
    <experiments>3</experiments>
</comment>
<comment type="interaction">
    <interactant intactId="EBI-6164389">
        <id>P04608</id>
    </interactant>
    <interactant intactId="EBI-395282">
        <id>Q9UHB7</id>
        <label>AFF4</label>
    </interactant>
    <organismsDiffer>true</organismsDiffer>
    <experiments>4</experiments>
</comment>
<comment type="interaction">
    <interactant intactId="EBI-6164389">
        <id>P04608</id>
    </interactant>
    <interactant intactId="EBI-2371423">
        <id>O43865</id>
        <label>AHCYL1</label>
    </interactant>
    <organismsDiffer>true</organismsDiffer>
    <experiments>5</experiments>
</comment>
<comment type="interaction">
    <interactant intactId="EBI-6164389">
        <id>P04608</id>
    </interactant>
    <interactant intactId="EBI-2479671">
        <id>O60563</id>
        <label>CCNT1</label>
    </interactant>
    <organismsDiffer>true</organismsDiffer>
    <experiments>9</experiments>
</comment>
<comment type="interaction">
    <interactant intactId="EBI-6164389">
        <id>P04608</id>
    </interactant>
    <interactant intactId="EBI-1383449">
        <id>P50750</id>
        <label>CDK9</label>
    </interactant>
    <organismsDiffer>true</organismsDiffer>
    <experiments>8</experiments>
</comment>
<comment type="interaction">
    <interactant intactId="EBI-6164389">
        <id>P04608</id>
    </interactant>
    <interactant intactId="EBI-81215">
        <id>Q92793</id>
        <label>CREBBP</label>
    </interactant>
    <organismsDiffer>true</organismsDiffer>
    <experiments>2</experiments>
</comment>
<comment type="interaction">
    <interactant intactId="EBI-6164389">
        <id>P04608</id>
    </interactant>
    <interactant intactId="EBI-2559096">
        <id>Q9NXF7</id>
        <label>DCAF16</label>
    </interactant>
    <organismsDiffer>true</organismsDiffer>
    <experiments>2</experiments>
</comment>
<comment type="interaction">
    <interactant intactId="EBI-6164389">
        <id>P04608</id>
    </interactant>
    <interactant intactId="EBI-353779">
        <id>O00571</id>
        <label>DDX3X</label>
    </interactant>
    <organismsDiffer>true</organismsDiffer>
    <experiments>4</experiments>
</comment>
<comment type="interaction">
    <interactant intactId="EBI-6164389">
        <id>P04608</id>
    </interactant>
    <interactant intactId="EBI-447295">
        <id>Q09472</id>
        <label>EP300</label>
    </interactant>
    <organismsDiffer>true</organismsDiffer>
    <experiments>3</experiments>
</comment>
<comment type="interaction">
    <interactant intactId="EBI-6164389">
        <id>P04608</id>
    </interactant>
    <interactant intactId="EBI-2509901">
        <id>Q9UK99</id>
        <label>FBXO3</label>
    </interactant>
    <organismsDiffer>true</organismsDiffer>
    <experiments>3</experiments>
</comment>
<comment type="interaction">
    <interactant intactId="EBI-6164389">
        <id>P04608</id>
    </interactant>
    <interactant intactId="EBI-356392">
        <id>P55209</id>
        <label>NAP1L1</label>
    </interactant>
    <organismsDiffer>true</organismsDiffer>
    <experiments>6</experiments>
</comment>
<comment type="interaction">
    <interactant intactId="EBI-6164389">
        <id>P04608</id>
    </interactant>
    <interactant intactId="EBI-2255116">
        <id>Q99733</id>
        <label>NAP1L4</label>
    </interactant>
    <organismsDiffer>true</organismsDiffer>
    <experiments>3</experiments>
</comment>
<comment type="interaction">
    <interactant intactId="EBI-6164389">
        <id>P04608</id>
    </interactant>
    <interactant intactId="EBI-721544">
        <id>O75607</id>
        <label>NPM3</label>
    </interactant>
    <organismsDiffer>true</organismsDiffer>
    <experiments>2</experiments>
</comment>
<comment type="interaction">
    <interactant intactId="EBI-6164389">
        <id>P04608</id>
    </interactant>
    <interactant intactId="EBI-637807">
        <id>Q86U86</id>
        <label>PBRM1</label>
    </interactant>
    <organismsDiffer>true</organismsDiffer>
    <experiments>2</experiments>
</comment>
<comment type="interaction">
    <interactant intactId="EBI-6164389">
        <id>P04608</id>
    </interactant>
    <interactant intactId="EBI-725702">
        <id>O15355</id>
        <label>PPM1G</label>
    </interactant>
    <organismsDiffer>true</organismsDiffer>
    <experiments>3</experiments>
</comment>
<comment type="interaction">
    <interactant intactId="EBI-6164389">
        <id>P04608</id>
    </interactant>
    <interactant intactId="EBI-1802965">
        <id>Q96EB6</id>
        <label>SIRT1</label>
    </interactant>
    <organismsDiffer>true</organismsDiffer>
    <experiments>3</experiments>
</comment>
<comment type="interaction">
    <interactant intactId="EBI-6164389">
        <id>P04608</id>
    </interactant>
    <interactant intactId="EBI-306876">
        <id>P51784</id>
        <label>USP11</label>
    </interactant>
    <organismsDiffer>true</organismsDiffer>
    <experiments>3</experiments>
</comment>
<comment type="subcellular location">
    <subcellularLocation>
        <location evidence="1 14">Host nucleus</location>
        <location evidence="1 14">Host nucleolus</location>
    </subcellularLocation>
    <subcellularLocation>
        <location evidence="1 14 17">Host cytoplasm</location>
    </subcellularLocation>
    <subcellularLocation>
        <location evidence="1 14">Secreted</location>
    </subcellularLocation>
    <text>Probably localizes to both nuclear and nucleolar compartments. Nuclear localization is mediated through the interaction of the nuclear localization signal with importin KPNB1. Secretion occurs through a Golgi-independent pathway. Tat is released from infected cells to the extracellular space where it remains associated to the cell membrane, or is secreted into the cerebrospinal fluid and sera. Extracellular Tat can be endocytosed by surrounding uninfected cells via binding to several receptors depending on the cell type.</text>
</comment>
<comment type="alternative products">
    <event type="alternative splicing"/>
    <isoform>
        <id>P04608-1</id>
        <name>Long</name>
        <sequence type="displayed"/>
    </isoform>
    <isoform>
        <id>P04608-2</id>
        <name>Short</name>
        <sequence type="described" ref="VSP_022300"/>
    </isoform>
</comment>
<comment type="domain">
    <text evidence="1">The cell attachment site mediates the interaction with ITGAV/ITGB3 and ITGA5/ITGB1 integrins, leading to vascular cell migration and invasion. This interaction also provides endothelial cells with the adhesion signal they require to grow in response to mitogens.</text>
</comment>
<comment type="domain">
    <text evidence="1">The Cys-rich region may bind 2 zinc ions. This region is involved in binding to KAT5.</text>
</comment>
<comment type="domain">
    <text evidence="1">The transactivation domain mediates the interaction with CCNT1, GCN5L2, and MDM2.</text>
</comment>
<comment type="domain">
    <text evidence="1">The Arg-rich RNA-binding region binds the TAR RNA. This region also mediates the nuclear localization through direct binding to KPNB1 and is involved in Tat's transfer across cell membranes (protein transduction). The same region is required for the interaction with EP300, PCAF, EIF2AK2 and KDR.</text>
</comment>
<comment type="PTM">
    <text evidence="1 9">Asymmetrical arginine methylation by host PRMT6 seems to diminish the transactivation capacity of Tat and affects the interaction with host CCNT1.</text>
</comment>
<comment type="PTM">
    <text evidence="1 13">Acetylation by EP300, CREBBP, GCN5L2/GCN5 and PCAF regulates the transactivation activity of Tat. EP300-mediated acetylation of Lys-50 promotes dissociation of Tat from the TAR RNA through the competitive binding to PCAF's bromodomain. In addition, the non-acetylated Tat's N-terminus can also interact with PCAF. PCAF-mediated acetylation of Lys-28 enhances Tat's binding to CCNT1. Lys-50 is deacetylated by SIRT1.</text>
</comment>
<comment type="PTM">
    <text evidence="1 5">Polyubiquitination by host MDM2 does not target Tat to degradation, but activates its transactivation function and fosters interaction with CCNT1 and TAR RNA.</text>
</comment>
<comment type="PTM">
    <text evidence="1 20">Phosphorylated by EIF2AK2 on serine and threonine residues adjacent to the basic region important for TAR RNA binding and function. Phosphorylation of Tat by EIF2AK2 is dependent on the prior activation of EIF2AK2 by dsRNA.</text>
</comment>
<comment type="miscellaneous">
    <text evidence="1">This truncated variant has a premature stop codon. It may have arose as a consequence of tissue culture passaging.</text>
</comment>
<comment type="miscellaneous">
    <text evidence="1">HIV-1 lineages are divided in three main groups, M (for Major), O (for Outlier), and N (for New, or Non-M, Non-O). The vast majority of strains found worldwide belong to the group M. Group O seems to be endemic to and largely confined to Cameroon and neighboring countries in West Central Africa, where these viruses represent a small minority of HIV-1 strains. The group N is represented by a limited number of isolates from Cameroonian persons. The group M is further subdivided in 9 clades or subtypes (A to D, F to H, J and K).</text>
</comment>
<comment type="miscellaneous">
    <molecule>Isoform Short</molecule>
    <text evidence="23">Expressed in the late stage of the infection cycle, when unspliced viral RNAs are exported to the cytoplasm by the viral Rev protein.</text>
</comment>
<comment type="similarity">
    <text evidence="1">Belongs to the lentiviruses Tat family.</text>
</comment>
<proteinExistence type="evidence at protein level"/>
<dbReference type="EMBL" id="K03455">
    <property type="protein sequence ID" value="AAB50256.1"/>
    <property type="molecule type" value="Genomic_RNA"/>
</dbReference>
<dbReference type="EMBL" id="AF033819">
    <property type="protein sequence ID" value="AAC82591.1"/>
    <property type="molecule type" value="Genomic_RNA"/>
</dbReference>
<dbReference type="RefSeq" id="NP_057853.1">
    <property type="nucleotide sequence ID" value="NC_001802.1"/>
</dbReference>
<dbReference type="PDB" id="3MI9">
    <property type="method" value="X-ray"/>
    <property type="resolution" value="2.10 A"/>
    <property type="chains" value="C=1-86"/>
</dbReference>
<dbReference type="PDB" id="3MIA">
    <property type="method" value="X-ray"/>
    <property type="resolution" value="3.00 A"/>
    <property type="chains" value="C=1-86"/>
</dbReference>
<dbReference type="PDB" id="4OR5">
    <property type="method" value="X-ray"/>
    <property type="resolution" value="2.90 A"/>
    <property type="chains" value="C/H=1-48"/>
</dbReference>
<dbReference type="PDB" id="5V61">
    <property type="method" value="X-ray"/>
    <property type="resolution" value="2.20 A"/>
    <property type="chains" value="I=49-57"/>
</dbReference>
<dbReference type="PDB" id="6CYT">
    <property type="method" value="X-ray"/>
    <property type="resolution" value="3.50 A"/>
    <property type="chains" value="D=1-57"/>
</dbReference>
<dbReference type="PDB" id="6MCE">
    <property type="method" value="NMR"/>
    <property type="chains" value="B=44-60"/>
</dbReference>
<dbReference type="PDB" id="6MCF">
    <property type="method" value="NMR"/>
    <property type="chains" value="B=44-60"/>
</dbReference>
<dbReference type="PDBsum" id="3MI9"/>
<dbReference type="PDBsum" id="3MIA"/>
<dbReference type="PDBsum" id="4OR5"/>
<dbReference type="PDBsum" id="5V61"/>
<dbReference type="PDBsum" id="6CYT"/>
<dbReference type="PDBsum" id="6MCE"/>
<dbReference type="PDBsum" id="6MCF"/>
<dbReference type="SMR" id="P04608"/>
<dbReference type="BioGRID" id="1205541">
    <property type="interactions" value="338"/>
</dbReference>
<dbReference type="IntAct" id="P04608">
    <property type="interactions" value="34"/>
</dbReference>
<dbReference type="MINT" id="P04608"/>
<dbReference type="BindingDB" id="P04608"/>
<dbReference type="ChEMBL" id="CHEMBL4011"/>
<dbReference type="DrugCentral" id="P04608"/>
<dbReference type="iPTMnet" id="P04608"/>
<dbReference type="GeneID" id="155871"/>
<dbReference type="KEGG" id="vg:155871"/>
<dbReference type="Reactome" id="R-HSA-167200">
    <property type="pathway name" value="Formation of HIV-1 elongation complex containing HIV-1 Tat"/>
</dbReference>
<dbReference type="Reactome" id="R-HSA-167238">
    <property type="pathway name" value="Pausing and recovery of Tat-mediated HIV elongation"/>
</dbReference>
<dbReference type="Reactome" id="R-HSA-167243">
    <property type="pathway name" value="Tat-mediated HIV elongation arrest and recovery"/>
</dbReference>
<dbReference type="Reactome" id="R-HSA-167246">
    <property type="pathway name" value="Tat-mediated elongation of the HIV-1 transcript"/>
</dbReference>
<dbReference type="Reactome" id="R-HSA-176034">
    <property type="pathway name" value="Interactions of Tat with host cellular proteins"/>
</dbReference>
<dbReference type="Reactome" id="R-HSA-9833482">
    <molecule id="P04608-2"/>
    <property type="pathway name" value="PKR-mediated signaling"/>
</dbReference>
<dbReference type="EvolutionaryTrace" id="P04608"/>
<dbReference type="Proteomes" id="UP000002241">
    <property type="component" value="Segment"/>
</dbReference>
<dbReference type="Proteomes" id="UP000105453">
    <property type="component" value="Segment"/>
</dbReference>
<dbReference type="GO" id="GO:0005576">
    <property type="term" value="C:extracellular region"/>
    <property type="evidence" value="ECO:0007669"/>
    <property type="project" value="UniProtKB-SubCell"/>
</dbReference>
<dbReference type="GO" id="GO:0030430">
    <property type="term" value="C:host cell cytoplasm"/>
    <property type="evidence" value="ECO:0007669"/>
    <property type="project" value="UniProtKB-SubCell"/>
</dbReference>
<dbReference type="GO" id="GO:0044196">
    <property type="term" value="C:host cell nucleolus"/>
    <property type="evidence" value="ECO:0007669"/>
    <property type="project" value="UniProtKB-SubCell"/>
</dbReference>
<dbReference type="GO" id="GO:0042025">
    <property type="term" value="C:host cell nucleus"/>
    <property type="evidence" value="ECO:0000314"/>
    <property type="project" value="ParkinsonsUK-UCL"/>
</dbReference>
<dbReference type="GO" id="GO:0042805">
    <property type="term" value="F:actinin binding"/>
    <property type="evidence" value="ECO:0000353"/>
    <property type="project" value="BHF-UCL"/>
</dbReference>
<dbReference type="GO" id="GO:0030332">
    <property type="term" value="F:cyclin binding"/>
    <property type="evidence" value="ECO:0000353"/>
    <property type="project" value="ParkinsonsUK-UCL"/>
</dbReference>
<dbReference type="GO" id="GO:0035035">
    <property type="term" value="F:histone acetyltransferase binding"/>
    <property type="evidence" value="ECO:0000315"/>
    <property type="project" value="DisProt"/>
</dbReference>
<dbReference type="GO" id="GO:0046872">
    <property type="term" value="F:metal ion binding"/>
    <property type="evidence" value="ECO:0007669"/>
    <property type="project" value="UniProtKB-UniRule"/>
</dbReference>
<dbReference type="GO" id="GO:0140313">
    <property type="term" value="F:molecular sequestering activity"/>
    <property type="evidence" value="ECO:0000269"/>
    <property type="project" value="DisProt"/>
</dbReference>
<dbReference type="GO" id="GO:0031491">
    <property type="term" value="F:nucleosome binding"/>
    <property type="evidence" value="ECO:0000353"/>
    <property type="project" value="DisProt"/>
</dbReference>
<dbReference type="GO" id="GO:0019904">
    <property type="term" value="F:protein domain specific binding"/>
    <property type="evidence" value="ECO:0000353"/>
    <property type="project" value="CAFA"/>
</dbReference>
<dbReference type="GO" id="GO:0004865">
    <property type="term" value="F:protein serine/threonine phosphatase inhibitor activity"/>
    <property type="evidence" value="ECO:0007669"/>
    <property type="project" value="UniProtKB-KW"/>
</dbReference>
<dbReference type="GO" id="GO:0043175">
    <property type="term" value="F:RNA polymerase core enzyme binding"/>
    <property type="evidence" value="ECO:0000270"/>
    <property type="project" value="DisProt"/>
</dbReference>
<dbReference type="GO" id="GO:0001070">
    <property type="term" value="F:RNA-binding transcription regulator activity"/>
    <property type="evidence" value="ECO:0000304"/>
    <property type="project" value="ParkinsonsUK-UCL"/>
</dbReference>
<dbReference type="GO" id="GO:1990970">
    <property type="term" value="F:trans-activation response element binding"/>
    <property type="evidence" value="ECO:0000353"/>
    <property type="project" value="DisProt"/>
</dbReference>
<dbReference type="GO" id="GO:0001223">
    <property type="term" value="F:transcription coactivator binding"/>
    <property type="evidence" value="ECO:0000353"/>
    <property type="project" value="DisProt"/>
</dbReference>
<dbReference type="GO" id="GO:0140537">
    <property type="term" value="F:transcription regulator activator activity"/>
    <property type="evidence" value="ECO:0000314"/>
    <property type="project" value="DisProt"/>
</dbReference>
<dbReference type="GO" id="GO:0006351">
    <property type="term" value="P:DNA-templated transcription"/>
    <property type="evidence" value="ECO:0007669"/>
    <property type="project" value="UniProtKB-UniRule"/>
</dbReference>
<dbReference type="GO" id="GO:0010801">
    <property type="term" value="P:negative regulation of peptidyl-threonine phosphorylation"/>
    <property type="evidence" value="ECO:0000315"/>
    <property type="project" value="CAFA"/>
</dbReference>
<dbReference type="GO" id="GO:0032968">
    <property type="term" value="P:positive regulation of transcription elongation by RNA polymerase II"/>
    <property type="evidence" value="ECO:0000314"/>
    <property type="project" value="UniProtKB"/>
</dbReference>
<dbReference type="GO" id="GO:0050434">
    <property type="term" value="P:positive regulation of viral transcription"/>
    <property type="evidence" value="ECO:0000314"/>
    <property type="project" value="BHF-UCL"/>
</dbReference>
<dbReference type="GO" id="GO:0042783">
    <property type="term" value="P:symbiont-mediated evasion of host immune response"/>
    <property type="evidence" value="ECO:0000314"/>
    <property type="project" value="DisProt"/>
</dbReference>
<dbReference type="GO" id="GO:0039525">
    <property type="term" value="P:symbiont-mediated perturbation of host chromatin organization"/>
    <property type="evidence" value="ECO:0000314"/>
    <property type="project" value="UniProtKB"/>
</dbReference>
<dbReference type="GO" id="GO:0039588">
    <property type="term" value="P:symbiont-mediated suppression of host antigen processing and presentation"/>
    <property type="evidence" value="ECO:0000269"/>
    <property type="project" value="SigSci"/>
</dbReference>
<dbReference type="GO" id="GO:0052170">
    <property type="term" value="P:symbiont-mediated suppression of host innate immune response"/>
    <property type="evidence" value="ECO:0007669"/>
    <property type="project" value="UniProtKB-KW"/>
</dbReference>
<dbReference type="GO" id="GO:0039606">
    <property type="term" value="P:symbiont-mediated suppression of host translation initiation"/>
    <property type="evidence" value="ECO:0007669"/>
    <property type="project" value="UniProtKB-KW"/>
</dbReference>
<dbReference type="GO" id="GO:0039502">
    <property type="term" value="P:symbiont-mediated suppression of host type I interferon-mediated signaling pathway"/>
    <property type="evidence" value="ECO:0007669"/>
    <property type="project" value="UniProtKB-UniRule"/>
</dbReference>
<dbReference type="DisProt" id="DP00929"/>
<dbReference type="FunFam" id="4.10.20.10:FF:000001">
    <property type="entry name" value="Protein Tat"/>
    <property type="match status" value="1"/>
</dbReference>
<dbReference type="Gene3D" id="4.10.20.10">
    <property type="entry name" value="Tat domain"/>
    <property type="match status" value="1"/>
</dbReference>
<dbReference type="HAMAP" id="MF_04079">
    <property type="entry name" value="HIV_TAT"/>
    <property type="match status" value="1"/>
</dbReference>
<dbReference type="IDEAL" id="IID90033"/>
<dbReference type="InterPro" id="IPR001831">
    <property type="entry name" value="IV_Tat"/>
</dbReference>
<dbReference type="InterPro" id="IPR036963">
    <property type="entry name" value="Tat_dom_sf"/>
</dbReference>
<dbReference type="Pfam" id="PF00539">
    <property type="entry name" value="Tat"/>
    <property type="match status" value="1"/>
</dbReference>
<dbReference type="PRINTS" id="PR00055">
    <property type="entry name" value="HIVTATDOMAIN"/>
</dbReference>
<keyword id="KW-0002">3D-structure</keyword>
<keyword id="KW-0007">Acetylation</keyword>
<keyword id="KW-0010">Activator</keyword>
<keyword id="KW-0014">AIDS</keyword>
<keyword id="KW-0025">Alternative splicing</keyword>
<keyword id="KW-0053">Apoptosis</keyword>
<keyword id="KW-1035">Host cytoplasm</keyword>
<keyword id="KW-1048">Host nucleus</keyword>
<keyword id="KW-0945">Host-virus interaction</keyword>
<keyword id="KW-1090">Inhibition of host innate immune response by virus</keyword>
<keyword id="KW-1114">Inhibition of host interferon signaling pathway by virus</keyword>
<keyword id="KW-0922">Interferon antiviral system evasion</keyword>
<keyword id="KW-1017">Isopeptide bond</keyword>
<keyword id="KW-0479">Metal-binding</keyword>
<keyword id="KW-0488">Methylation</keyword>
<keyword id="KW-1122">Modulation of host chromatin by virus</keyword>
<keyword id="KW-1126">Modulation of host PP1 activity by virus</keyword>
<keyword id="KW-0597">Phosphoprotein</keyword>
<keyword id="KW-1185">Reference proteome</keyword>
<keyword id="KW-0694">RNA-binding</keyword>
<keyword id="KW-0964">Secreted</keyword>
<keyword id="KW-0804">Transcription</keyword>
<keyword id="KW-0805">Transcription regulation</keyword>
<keyword id="KW-0832">Ubl conjugation</keyword>
<keyword id="KW-0899">Viral immunoevasion</keyword>
<keyword id="KW-0862">Zinc</keyword>
<name>TAT_HV1H2</name>
<gene>
    <name evidence="1" type="primary">tat</name>
</gene>
<reference key="1">
    <citation type="journal article" date="1985" name="Science">
        <title>Location of the trans-activating region on the genome of human T-cell lymphotropic virus type III.</title>
        <authorList>
            <person name="Sodroski J."/>
            <person name="Patarca R."/>
            <person name="Rosen C."/>
            <person name="Wong-Staal F."/>
            <person name="Haseltine W."/>
        </authorList>
    </citation>
    <scope>NUCLEOTIDE SEQUENCE [GENOMIC RNA]</scope>
</reference>
<reference key="2">
    <citation type="journal article" date="1987" name="AIDS Res. Hum. Retroviruses">
        <title>Complete nucleotide sequences of functional clones of the AIDS virus.</title>
        <authorList>
            <person name="Ratner L."/>
            <person name="Fisher A."/>
            <person name="Jagodzinski L.L."/>
            <person name="Mitsuya H."/>
            <person name="Liou R.-S."/>
            <person name="Gallo R.C."/>
            <person name="Wong-Staal F."/>
        </authorList>
    </citation>
    <scope>NUCLEOTIDE SEQUENCE [GENOMIC RNA]</scope>
</reference>
<reference key="3">
    <citation type="submission" date="1997-04" db="EMBL/GenBank/DDBJ databases">
        <authorList>
            <person name="Ratner L."/>
            <person name="Fisher A."/>
            <person name="Jagodzinski L.L."/>
            <person name="Mitsuya H."/>
            <person name="Liou R.-S."/>
            <person name="Gallo R.C."/>
            <person name="Wong-Staal F."/>
        </authorList>
    </citation>
    <scope>SEQUENCE REVISION</scope>
</reference>
<reference key="4">
    <citation type="submission" date="1997-11" db="EMBL/GenBank/DDBJ databases">
        <authorList>
            <person name="Chappey C."/>
        </authorList>
    </citation>
    <scope>NUCLEOTIDE SEQUENCE [GENOMIC RNA]</scope>
</reference>
<reference key="5">
    <citation type="journal article" date="1991" name="EMBO J.">
        <title>HIV-1 Tat protein promotes formation of more-processive elongation complexes.</title>
        <authorList>
            <person name="Marciniak R.A."/>
            <person name="Sharp P.A."/>
        </authorList>
    </citation>
    <scope>FUNCTION</scope>
</reference>
<reference key="6">
    <citation type="journal article" date="1995" name="J. Mol. Biol.">
        <title>Evidence for functional interaction between the HIV-1 Tat transactivator and the TATA box binding protein in vivo.</title>
        <authorList>
            <person name="Veschambre P."/>
            <person name="Simard P."/>
            <person name="Jalinot P."/>
        </authorList>
    </citation>
    <scope>FUNCTION</scope>
    <scope>INTERACTION WITH HOST TBP</scope>
</reference>
<reference key="7">
    <citation type="journal article" date="1997" name="J. Biol. Chem.">
        <title>The Tat protein of human immunodeficiency virus type 1 is a substrate and inhibitor of the interferon-induced, virally activated protein kinase, PKR.</title>
        <authorList>
            <person name="Brand S.R."/>
            <person name="Kobayashi R."/>
            <person name="Mathews M.B."/>
        </authorList>
    </citation>
    <scope>PHOSPHORYLATION</scope>
    <scope>INTERACTION WITH HOST EIF2AK2</scope>
    <scope>FUNCTION</scope>
</reference>
<reference key="8">
    <citation type="journal article" date="1998" name="Cell">
        <title>A novel CDK9-associated C-type cyclin interacts directly with HIV-1 Tat and mediates its high-affinity, loop-specific binding to TAR RNA.</title>
        <authorList>
            <person name="Wei P."/>
            <person name="Garber M.E."/>
            <person name="Fang S.-M."/>
            <person name="Fischer W.H."/>
            <person name="Jones K.A."/>
        </authorList>
    </citation>
    <scope>FUNCTION</scope>
    <scope>INTERACTION WITH HOST CCNT1</scope>
</reference>
<reference key="9">
    <citation type="journal article" date="1998" name="Proc. Natl. Acad. Sci. U.S.A.">
        <title>HIV-1 tat transactivator recruits p300 and CREB-binding protein histone acetyltransferases to the viral promoter.</title>
        <authorList>
            <person name="Marzio G."/>
            <person name="Tyagi M."/>
            <person name="Gutierrez M.I."/>
            <person name="Giacca M."/>
        </authorList>
    </citation>
    <scope>INTERACTION WITH HOST CREBBP AND EP300</scope>
</reference>
<reference key="10">
    <citation type="journal article" date="1999" name="Blood">
        <title>The Tat protein of human immunodeficiency virus type-1 promotes vascular cell growth and locomotion by engaging the alpha5beta1 and alphavbeta3 integrins and by mobilizing sequestered basic fibroblast growth factor.</title>
        <authorList>
            <person name="Barillari G."/>
            <person name="Sgadari C."/>
            <person name="Fiorelli V."/>
            <person name="Samaniego F."/>
            <person name="Colombini S."/>
            <person name="Manzari V."/>
            <person name="Modesti A."/>
            <person name="Nair B.C."/>
            <person name="Cafaro A."/>
            <person name="Stuerzl M."/>
            <person name="Ensoli B."/>
        </authorList>
    </citation>
    <scope>FUNCTION</scope>
</reference>
<reference key="11">
    <citation type="journal article" date="2000" name="Nat. Med.">
        <title>Uptake of HIV-1 tat protein mediated by low-density lipoprotein receptor-related protein disrupts the neuronal metabolic balance of the receptor ligands.</title>
        <authorList>
            <person name="Liu Y."/>
            <person name="Jones M."/>
            <person name="Hingtgen C.M."/>
            <person name="Bu G."/>
            <person name="Laribee N."/>
            <person name="Tanzi R.E."/>
            <person name="Moir R.D."/>
            <person name="Nath A."/>
            <person name="He J.J."/>
        </authorList>
    </citation>
    <scope>INTERACTION WITH HUMAN LDLR</scope>
</reference>
<reference key="12">
    <citation type="journal article" date="2003" name="Nat. Cell Biol.">
        <title>A non-proteolytic role for ubiquitin in Tat-mediated transactivation of the HIV-1 promoter.</title>
        <authorList>
            <person name="Bres V."/>
            <person name="Kiernan R.E."/>
            <person name="Linares L.K."/>
            <person name="Chable-Bessia C."/>
            <person name="Plechakova O."/>
            <person name="Treand C."/>
            <person name="Emiliani S."/>
            <person name="Peloponese J.-M."/>
            <person name="Jeang K.-T."/>
            <person name="Coux O."/>
            <person name="Scheffner M."/>
            <person name="Benkirane M."/>
        </authorList>
    </citation>
    <scope>UBIQUITINATION BY HOST MDM2</scope>
</reference>
<reference key="13">
    <citation type="journal article" date="2005" name="Microbes Infect.">
        <title>Decoding Tat: the biology of HIV Tat posttranslational modifications.</title>
        <authorList>
            <person name="Hetzer C."/>
            <person name="Dormeyer W."/>
            <person name="Schnolzer M."/>
            <person name="Ott M."/>
        </authorList>
    </citation>
    <scope>REVIEW</scope>
    <scope>ALTERNATIVE SPLICING</scope>
</reference>
<reference key="14">
    <citation type="journal article" date="2006" name="Front. Biosci.">
        <title>The multiple functions of HIV-1 Tat: proliferation versus apoptosis.</title>
        <authorList>
            <person name="Peruzzi F."/>
        </authorList>
    </citation>
    <scope>REVIEW</scope>
</reference>
<reference key="15">
    <citation type="journal article" date="2006" name="J. Biol. Chem.">
        <title>The SWI/SNF chromatin-remodeling complex is a cofactor for Tat transactivation of the HIV promoter.</title>
        <authorList>
            <person name="Mahmoudi T."/>
            <person name="Parra M."/>
            <person name="Vries R.G."/>
            <person name="Kauder S.E."/>
            <person name="Verrijzer C.P."/>
            <person name="Ott M."/>
            <person name="Verdin E."/>
        </authorList>
    </citation>
    <scope>FUNCTION</scope>
</reference>
<reference key="16">
    <citation type="journal article" date="2006" name="Microbes Infect.">
        <title>HIV tat and neurotoxicity.</title>
        <authorList>
            <person name="King J.E."/>
            <person name="Eugenin E.A."/>
            <person name="Buckner C.M."/>
            <person name="Berman J.W."/>
        </authorList>
    </citation>
    <scope>REVIEW</scope>
</reference>
<reference key="17">
    <citation type="journal article" date="2006" name="J. Virol.">
        <title>Acetylated Tat regulates human immunodeficiency virus type 1 splicing through its interaction with the splicing regulator p32.</title>
        <authorList>
            <person name="Berro R."/>
            <person name="Kehn K."/>
            <person name="de la Fuente C."/>
            <person name="Pumfery A."/>
            <person name="Adair R."/>
            <person name="Wade J."/>
            <person name="Colberg-Poley A.M."/>
            <person name="Hiscott J."/>
            <person name="Kashanchi F."/>
        </authorList>
    </citation>
    <scope>INTERACTION WITH HUMAN C1QBP</scope>
</reference>
<reference key="18">
    <citation type="journal article" date="2007" name="J. Virol.">
        <title>Arginine methylation of the human immunodeficiency virus type 1 Tat protein by PRMT6 negatively affects Tat Interactions with both cyclin T1 and the Tat transactivation region.</title>
        <authorList>
            <person name="Xie B."/>
            <person name="Invernizzi C.F."/>
            <person name="Richard S."/>
            <person name="Wainberg M.A."/>
        </authorList>
    </citation>
    <scope>FUNCTION</scope>
    <scope>METHYLATION AT ARG-52 AND ARG-53</scope>
</reference>
<reference key="19">
    <citation type="journal article" date="2007" name="Proc. Natl. Acad. Sci. U.S.A.">
        <title>HIV-tat induces formation of an LRP-PSD-95- NMDAR-nNOS complex that promotes apoptosis in neurons and astrocytes.</title>
        <authorList>
            <person name="Eugenin E.A."/>
            <person name="King J.E."/>
            <person name="Nath A."/>
            <person name="Calderon T.M."/>
            <person name="Zukin R.S."/>
            <person name="Bennett M.V."/>
            <person name="Berman J.W."/>
        </authorList>
    </citation>
    <scope>FUNCTION</scope>
</reference>
<reference key="20">
    <citation type="journal article" date="2008" name="J. Virol.">
        <title>CDK13, a new potential human immunodeficiency virus type 1 inhibitory factor regulating viral mRNA splicing.</title>
        <authorList>
            <person name="Berro R."/>
            <person name="Pedati C."/>
            <person name="Kehn-Hall K."/>
            <person name="Wu W."/>
            <person name="Klase Z."/>
            <person name="Even Y."/>
            <person name="Geneviere A.M."/>
            <person name="Ammosova T."/>
            <person name="Nekhai S."/>
            <person name="Kashanchi F."/>
        </authorList>
    </citation>
    <scope>FUNCTION</scope>
    <scope>INTERACTION WITH HUMAN CDK13</scope>
    <scope>ACETYLATION AT LYS-50 AND LYS-51</scope>
    <scope>MUTAGENESIS OF 50-LYS-LYS-51</scope>
</reference>
<reference key="21">
    <citation type="journal article" date="2008" name="Retrovirology">
        <title>The histone chaperone protein Nucleosome Assembly Protein-1 (hNAP-1) binds HIV-1 Tat and promotes viral transcription.</title>
        <authorList>
            <person name="Vardabasso C."/>
            <person name="Manganaro L."/>
            <person name="Lusic M."/>
            <person name="Marcello A."/>
            <person name="Giacca M."/>
        </authorList>
    </citation>
    <scope>INTERACTION WITH HUMAN NAP1L1</scope>
</reference>
<reference key="22">
    <citation type="journal article" date="2010" name="Amino Acids">
        <title>Subcellular localization of the interaction between the human immunodeficiency virus transactivator Tat and the nucleosome assembly protein 1.</title>
        <authorList>
            <person name="De Marco A."/>
            <person name="Dans P.D."/>
            <person name="Knezevich A."/>
            <person name="Maiuri P."/>
            <person name="Pantano S."/>
            <person name="Marcello A."/>
        </authorList>
    </citation>
    <scope>SUBCELLULAR LOCATION</scope>
    <scope>INTERACTION WITH HUMAN NAP1L1</scope>
</reference>
<reference key="23">
    <citation type="journal article" date="2012" name="Nucleic Acids Res.">
        <title>Human immunodeficiency virus-1 Tat activates NF-kappaB via physical interaction with IkappaB-alpha and p65.</title>
        <authorList>
            <person name="Fiume G."/>
            <person name="Vecchio E."/>
            <person name="De Laurentiis A."/>
            <person name="Trimboli F."/>
            <person name="Palmieri C."/>
            <person name="Pisano A."/>
            <person name="Falcone C."/>
            <person name="Pontoriero M."/>
            <person name="Rossi A."/>
            <person name="Scialdone A."/>
            <person name="Fasanella Masci F."/>
            <person name="Scala G."/>
            <person name="Quinto I."/>
        </authorList>
    </citation>
    <scope>FUNCTION</scope>
    <scope>INTERACTION WITH HOST RELA</scope>
</reference>
<reference key="24">
    <citation type="journal article" date="2013" name="Biochem. Biophys. Res. Commun.">
        <title>Interaction of the phospholipid scramblase 1 with HIV-1 Tat results in the repression of Tat-dependent transcription.</title>
        <authorList>
            <person name="Kusano S."/>
            <person name="Eizuru Y."/>
        </authorList>
    </citation>
    <scope>INTERACTION WITH HOSTZ PLS1</scope>
    <scope>SUBCELLULAR LOCATION</scope>
</reference>
<reference key="25">
    <citation type="journal article" date="2004" name="Biochemistry">
        <title>NMR mapping of the HIV-1 Tat interaction surface of the KIX domain of the human coactivator CBP.</title>
        <authorList>
            <person name="Vendel A.C."/>
            <person name="Lumb K.J."/>
        </authorList>
    </citation>
    <scope>STRUCTURE BY NMR OF 1-24 IN COMPLEX WITH CREBBP KIX DOMAIN</scope>
</reference>
<reference key="26">
    <citation type="journal article" date="2010" name="Nature">
        <title>Crystal structure of HIV-1 Tat complexed with human P-TEFb.</title>
        <authorList>
            <person name="Tahirov T.H."/>
            <person name="Babayeva N.D."/>
            <person name="Varzavand K."/>
            <person name="Cooper J.J."/>
            <person name="Sedore S.C."/>
            <person name="Price D.H."/>
        </authorList>
    </citation>
    <scope>X-RAY CRYSTALLOGRAPHY (2.10 ANGSTROMS) IN COMPLEX WITH ZINC</scope>
</reference>
<reference key="27">
    <citation type="journal article" date="2014" name="Cell Cycle">
        <title>Crystal structure of HIV-1 Tat complexed with human P-TEFb and AFF4.</title>
        <authorList>
            <person name="Gu J."/>
            <person name="Babayeva N.D."/>
            <person name="Suwa Y."/>
            <person name="Baranovskiy A.G."/>
            <person name="Price D.H."/>
            <person name="Tahirov T.H."/>
        </authorList>
    </citation>
    <scope>X-RAY CRYSTALLOGRAPHY (2.90 ANGSTROMS) OF 1-48 IN COMPLEX WITH ZINC</scope>
</reference>
<sequence>MEPVDPRLEPWKHPGSQPKTACTNCYCKKCCFHCQVCFITKALGISYGRKKRRQRRRAHQNSQTHQASLSKQPTSQPRGDPTGPKE</sequence>
<feature type="chain" id="PRO_0000085364" description="Protein Tat">
    <location>
        <begin position="1"/>
        <end position="86"/>
    </location>
</feature>
<feature type="region of interest" description="Transactivation" evidence="1">
    <location>
        <begin position="1"/>
        <end position="48"/>
    </location>
</feature>
<feature type="region of interest" description="Interaction with human CREBBP" evidence="1">
    <location>
        <begin position="1"/>
        <end position="24"/>
    </location>
</feature>
<feature type="region of interest" description="Cysteine-rich" evidence="1">
    <location>
        <begin position="22"/>
        <end position="37"/>
    </location>
</feature>
<feature type="region of interest" description="Core" evidence="1">
    <location>
        <begin position="38"/>
        <end position="48"/>
    </location>
</feature>
<feature type="region of interest" description="Disordered" evidence="2">
    <location>
        <begin position="48"/>
        <end position="86"/>
    </location>
</feature>
<feature type="region of interest" description="Interaction with the host capping enzyme RNGTT" evidence="1">
    <location>
        <begin position="49"/>
        <end position="86"/>
    </location>
</feature>
<feature type="short sequence motif" description="Nuclear localization signal, RNA-binding (TAR), and protein transduction" evidence="1">
    <location>
        <begin position="49"/>
        <end position="57"/>
    </location>
</feature>
<feature type="short sequence motif" description="Cell attachment site" evidence="1">
    <location>
        <begin position="78"/>
        <end position="80"/>
    </location>
</feature>
<feature type="compositionally biased region" description="Basic residues" evidence="2">
    <location>
        <begin position="48"/>
        <end position="59"/>
    </location>
</feature>
<feature type="compositionally biased region" description="Polar residues" evidence="2">
    <location>
        <begin position="60"/>
        <end position="77"/>
    </location>
</feature>
<feature type="binding site" evidence="1 15 18">
    <location>
        <position position="22"/>
    </location>
    <ligand>
        <name>Zn(2+)</name>
        <dbReference type="ChEBI" id="CHEBI:29105"/>
        <label>1</label>
    </ligand>
</feature>
<feature type="binding site" evidence="1 15 18">
    <location>
        <position position="25"/>
    </location>
    <ligand>
        <name>Zn(2+)</name>
        <dbReference type="ChEBI" id="CHEBI:29105"/>
        <label>2</label>
    </ligand>
</feature>
<feature type="binding site" evidence="1 15 18">
    <location>
        <position position="27"/>
    </location>
    <ligand>
        <name>Zn(2+)</name>
        <dbReference type="ChEBI" id="CHEBI:29105"/>
        <label>2</label>
    </ligand>
</feature>
<feature type="binding site" evidence="1 15 18">
    <location>
        <position position="30"/>
    </location>
    <ligand>
        <name>Zn(2+)</name>
        <dbReference type="ChEBI" id="CHEBI:29105"/>
        <label>2</label>
    </ligand>
</feature>
<feature type="binding site" evidence="1 15 18">
    <location>
        <position position="33"/>
    </location>
    <ligand>
        <name>Zn(2+)</name>
        <dbReference type="ChEBI" id="CHEBI:29105"/>
        <label>1</label>
    </ligand>
</feature>
<feature type="binding site" evidence="1 15 18">
    <location>
        <position position="34"/>
    </location>
    <ligand>
        <name>Zn(2+)</name>
        <dbReference type="ChEBI" id="CHEBI:29105"/>
        <label>1</label>
    </ligand>
</feature>
<feature type="binding site" evidence="1 15 18">
    <location>
        <position position="37"/>
    </location>
    <ligand>
        <name>Zn(2+)</name>
        <dbReference type="ChEBI" id="CHEBI:29105"/>
        <label>1</label>
    </ligand>
</feature>
<feature type="site" description="Essential for Tat translocation through the endosomal membrane" evidence="1">
    <location>
        <position position="11"/>
    </location>
</feature>
<feature type="modified residue" description="N6-acetyllysine; by host PCAF" evidence="1">
    <location>
        <position position="28"/>
    </location>
</feature>
<feature type="modified residue" description="N6-acetyllysine; by host EP300 and GCN5L2" evidence="1 13">
    <location>
        <position position="50"/>
    </location>
</feature>
<feature type="modified residue" description="N6-acetyllysine; by host EP300 and GCN5L2" evidence="1 13">
    <location>
        <position position="51"/>
    </location>
</feature>
<feature type="modified residue" description="Asymmetric dimethylarginine; by host PRMT6" evidence="1 9">
    <location>
        <position position="52"/>
    </location>
</feature>
<feature type="modified residue" description="Asymmetric dimethylarginine; by host PRMT6" evidence="1 9">
    <location>
        <position position="53"/>
    </location>
</feature>
<feature type="cross-link" description="Glycyl lysine isopeptide (Lys-Gly) (interchain with G-Cter in ubiquitin)" evidence="1">
    <location>
        <position position="71"/>
    </location>
</feature>
<feature type="splice variant" id="VSP_022300" description="In isoform Short.">
    <location>
        <begin position="73"/>
        <end position="86"/>
    </location>
</feature>
<feature type="mutagenesis site" description="Reduced virus production." evidence="13">
    <original>KK</original>
    <variation>AA</variation>
    <location>
        <begin position="50"/>
        <end position="51"/>
    </location>
</feature>
<feature type="helix" evidence="24">
    <location>
        <begin position="10"/>
        <end position="12"/>
    </location>
</feature>
<feature type="helix" evidence="24">
    <location>
        <begin position="30"/>
        <end position="32"/>
    </location>
</feature>
<feature type="helix" evidence="24">
    <location>
        <begin position="35"/>
        <end position="40"/>
    </location>
</feature>
<feature type="turn" evidence="25">
    <location>
        <begin position="41"/>
        <end position="43"/>
    </location>
</feature>
<feature type="turn" evidence="26">
    <location>
        <begin position="52"/>
        <end position="54"/>
    </location>
</feature>
<feature type="turn" evidence="26">
    <location>
        <begin position="57"/>
        <end position="59"/>
    </location>
</feature>
<accession>P04608</accession>
<accession>O09778</accession>
<evidence type="ECO:0000255" key="1">
    <source>
        <dbReference type="HAMAP-Rule" id="MF_04079"/>
    </source>
</evidence>
<evidence type="ECO:0000256" key="2">
    <source>
        <dbReference type="SAM" id="MobiDB-lite"/>
    </source>
</evidence>
<evidence type="ECO:0000269" key="3">
    <source>
    </source>
</evidence>
<evidence type="ECO:0000269" key="4">
    <source>
    </source>
</evidence>
<evidence type="ECO:0000269" key="5">
    <source>
    </source>
</evidence>
<evidence type="ECO:0000269" key="6">
    <source>
    </source>
</evidence>
<evidence type="ECO:0000269" key="7">
    <source>
    </source>
</evidence>
<evidence type="ECO:0000269" key="8">
    <source>
    </source>
</evidence>
<evidence type="ECO:0000269" key="9">
    <source>
    </source>
</evidence>
<evidence type="ECO:0000269" key="10">
    <source>
    </source>
</evidence>
<evidence type="ECO:0000269" key="11">
    <source>
    </source>
</evidence>
<evidence type="ECO:0000269" key="12">
    <source>
    </source>
</evidence>
<evidence type="ECO:0000269" key="13">
    <source>
    </source>
</evidence>
<evidence type="ECO:0000269" key="14">
    <source>
    </source>
</evidence>
<evidence type="ECO:0000269" key="15">
    <source>
    </source>
</evidence>
<evidence type="ECO:0000269" key="16">
    <source>
    </source>
</evidence>
<evidence type="ECO:0000269" key="17">
    <source>
    </source>
</evidence>
<evidence type="ECO:0000269" key="18">
    <source>
    </source>
</evidence>
<evidence type="ECO:0000269" key="19">
    <source>
    </source>
</evidence>
<evidence type="ECO:0000269" key="20">
    <source>
    </source>
</evidence>
<evidence type="ECO:0000269" key="21">
    <source>
    </source>
</evidence>
<evidence type="ECO:0000269" key="22">
    <source>
    </source>
</evidence>
<evidence type="ECO:0000305" key="23"/>
<evidence type="ECO:0007829" key="24">
    <source>
        <dbReference type="PDB" id="3MI9"/>
    </source>
</evidence>
<evidence type="ECO:0007829" key="25">
    <source>
        <dbReference type="PDB" id="3MIA"/>
    </source>
</evidence>
<evidence type="ECO:0007829" key="26">
    <source>
        <dbReference type="PDB" id="6MCF"/>
    </source>
</evidence>
<organism>
    <name type="scientific">Human immunodeficiency virus type 1 group M subtype B (isolate HXB2)</name>
    <name type="common">HIV-1</name>
    <dbReference type="NCBI Taxonomy" id="11706"/>
    <lineage>
        <taxon>Viruses</taxon>
        <taxon>Riboviria</taxon>
        <taxon>Pararnavirae</taxon>
        <taxon>Artverviricota</taxon>
        <taxon>Revtraviricetes</taxon>
        <taxon>Ortervirales</taxon>
        <taxon>Retroviridae</taxon>
        <taxon>Orthoretrovirinae</taxon>
        <taxon>Lentivirus</taxon>
        <taxon>Human immunodeficiency virus type 1</taxon>
    </lineage>
</organism>
<protein>
    <recommendedName>
        <fullName evidence="1">Protein Tat</fullName>
    </recommendedName>
    <alternativeName>
        <fullName evidence="1">Transactivating regulatory protein</fullName>
    </alternativeName>
</protein>